<keyword id="KW-0162">Chylomicron</keyword>
<keyword id="KW-0967">Endosome</keyword>
<keyword id="KW-0272">Extracellular matrix</keyword>
<keyword id="KW-0325">Glycoprotein</keyword>
<keyword id="KW-0345">HDL</keyword>
<keyword id="KW-0358">Heparin-binding</keyword>
<keyword id="KW-0445">Lipid transport</keyword>
<keyword id="KW-0446">Lipid-binding</keyword>
<keyword id="KW-0558">Oxidation</keyword>
<keyword id="KW-0597">Phosphoprotein</keyword>
<keyword id="KW-1185">Reference proteome</keyword>
<keyword id="KW-0677">Repeat</keyword>
<keyword id="KW-0964">Secreted</keyword>
<keyword id="KW-0732">Signal</keyword>
<keyword id="KW-0813">Transport</keyword>
<keyword id="KW-0850">VLDL</keyword>
<name>APOE_DICBM</name>
<dbReference type="EMBL" id="JACDTQ010001714">
    <property type="status" value="NOT_ANNOTATED_CDS"/>
    <property type="molecule type" value="Genomic_DNA"/>
</dbReference>
<dbReference type="RefSeq" id="XP_058385524.1">
    <property type="nucleotide sequence ID" value="XM_058529541.1"/>
</dbReference>
<dbReference type="RefSeq" id="XP_058385525.1">
    <property type="nucleotide sequence ID" value="XM_058529542.1"/>
</dbReference>
<dbReference type="SMR" id="P0DUJ0"/>
<dbReference type="GeneID" id="131396975"/>
<dbReference type="OrthoDB" id="9048614at2759"/>
<dbReference type="Proteomes" id="UP000551758">
    <property type="component" value="Unassembled WGS sequence"/>
</dbReference>
<dbReference type="GO" id="GO:0042627">
    <property type="term" value="C:chylomicron"/>
    <property type="evidence" value="ECO:0007669"/>
    <property type="project" value="UniProtKB-KW"/>
</dbReference>
<dbReference type="GO" id="GO:0070062">
    <property type="term" value="C:extracellular exosome"/>
    <property type="evidence" value="ECO:0000250"/>
    <property type="project" value="UniProtKB"/>
</dbReference>
<dbReference type="GO" id="GO:0034364">
    <property type="term" value="C:high-density lipoprotein particle"/>
    <property type="evidence" value="ECO:0007669"/>
    <property type="project" value="UniProtKB-KW"/>
</dbReference>
<dbReference type="GO" id="GO:0034362">
    <property type="term" value="C:low-density lipoprotein particle"/>
    <property type="evidence" value="ECO:0007669"/>
    <property type="project" value="TreeGrafter"/>
</dbReference>
<dbReference type="GO" id="GO:0097487">
    <property type="term" value="C:multivesicular body, internal vesicle"/>
    <property type="evidence" value="ECO:0000250"/>
    <property type="project" value="UniProtKB"/>
</dbReference>
<dbReference type="GO" id="GO:0034361">
    <property type="term" value="C:very-low-density lipoprotein particle"/>
    <property type="evidence" value="ECO:0007669"/>
    <property type="project" value="UniProtKB-KW"/>
</dbReference>
<dbReference type="GO" id="GO:0120020">
    <property type="term" value="F:cholesterol transfer activity"/>
    <property type="evidence" value="ECO:0007669"/>
    <property type="project" value="TreeGrafter"/>
</dbReference>
<dbReference type="GO" id="GO:0008201">
    <property type="term" value="F:heparin binding"/>
    <property type="evidence" value="ECO:0007669"/>
    <property type="project" value="UniProtKB-KW"/>
</dbReference>
<dbReference type="GO" id="GO:0060228">
    <property type="term" value="F:phosphatidylcholine-sterol O-acyltransferase activator activity"/>
    <property type="evidence" value="ECO:0007669"/>
    <property type="project" value="TreeGrafter"/>
</dbReference>
<dbReference type="GO" id="GO:0005543">
    <property type="term" value="F:phospholipid binding"/>
    <property type="evidence" value="ECO:0007669"/>
    <property type="project" value="TreeGrafter"/>
</dbReference>
<dbReference type="GO" id="GO:0055090">
    <property type="term" value="P:acylglycerol homeostasis"/>
    <property type="evidence" value="ECO:0007669"/>
    <property type="project" value="TreeGrafter"/>
</dbReference>
<dbReference type="GO" id="GO:0033344">
    <property type="term" value="P:cholesterol efflux"/>
    <property type="evidence" value="ECO:0007669"/>
    <property type="project" value="TreeGrafter"/>
</dbReference>
<dbReference type="GO" id="GO:0008203">
    <property type="term" value="P:cholesterol metabolic process"/>
    <property type="evidence" value="ECO:0007669"/>
    <property type="project" value="TreeGrafter"/>
</dbReference>
<dbReference type="GO" id="GO:0042157">
    <property type="term" value="P:lipoprotein metabolic process"/>
    <property type="evidence" value="ECO:0007669"/>
    <property type="project" value="InterPro"/>
</dbReference>
<dbReference type="GO" id="GO:0032438">
    <property type="term" value="P:melanosome organization"/>
    <property type="evidence" value="ECO:0000250"/>
    <property type="project" value="UniProtKB"/>
</dbReference>
<dbReference type="GO" id="GO:0033700">
    <property type="term" value="P:phospholipid efflux"/>
    <property type="evidence" value="ECO:0007669"/>
    <property type="project" value="TreeGrafter"/>
</dbReference>
<dbReference type="FunFam" id="1.20.120.20:FF:000002">
    <property type="entry name" value="Apolipoprotein E"/>
    <property type="match status" value="1"/>
</dbReference>
<dbReference type="FunFam" id="1.20.120.20:FF:000003">
    <property type="entry name" value="Apolipoprotein E"/>
    <property type="match status" value="1"/>
</dbReference>
<dbReference type="Gene3D" id="1.20.120.20">
    <property type="entry name" value="Apolipoprotein"/>
    <property type="match status" value="2"/>
</dbReference>
<dbReference type="InterPro" id="IPR000074">
    <property type="entry name" value="ApoA_E"/>
</dbReference>
<dbReference type="InterPro" id="IPR050163">
    <property type="entry name" value="Apolipoprotein_A1/A4/E"/>
</dbReference>
<dbReference type="PANTHER" id="PTHR18976">
    <property type="entry name" value="APOLIPOPROTEIN"/>
    <property type="match status" value="1"/>
</dbReference>
<dbReference type="PANTHER" id="PTHR18976:SF2">
    <property type="entry name" value="APOLIPOPROTEIN E"/>
    <property type="match status" value="1"/>
</dbReference>
<dbReference type="Pfam" id="PF01442">
    <property type="entry name" value="Apolipoprotein"/>
    <property type="match status" value="1"/>
</dbReference>
<dbReference type="SUPFAM" id="SSF58113">
    <property type="entry name" value="Apolipoprotein A-I"/>
    <property type="match status" value="1"/>
</dbReference>
<sequence length="316" mass="35672">MKVLWAALVVTLLAGCGADVEPGPEVQPGPEVQLGKEWATWQASQPWEQALGRFWNYLRWVQTLSEKVQEQLLSSQVTEELTALMDDTMKEVKACKSELEEQLGPVTEETKARVSKELQAAQARLGADMEEVRSRLAQYRGELQAMVGQSTEELRGRLSAHLRKLRKRLLRDAEDLQRRLAVYQAGIREGAARSVNTLREHLGPLAEQAATVHTLVSKPLQERAEAWAQRLRGRLEKAGFPVGDRLDEVREQVQEVRAKVEEQANQVRLQAEAFQGRLKSWFEPLVQDMQQKWAELVEKVQLAVGAVPTSVPSEKQ</sequence>
<organism>
    <name type="scientific">Diceros bicornis minor</name>
    <name type="common">South-central black rhinoceros</name>
    <dbReference type="NCBI Taxonomy" id="77932"/>
    <lineage>
        <taxon>Eukaryota</taxon>
        <taxon>Metazoa</taxon>
        <taxon>Chordata</taxon>
        <taxon>Craniata</taxon>
        <taxon>Vertebrata</taxon>
        <taxon>Euteleostomi</taxon>
        <taxon>Mammalia</taxon>
        <taxon>Eutheria</taxon>
        <taxon>Laurasiatheria</taxon>
        <taxon>Perissodactyla</taxon>
        <taxon>Rhinocerotidae</taxon>
        <taxon>Diceros</taxon>
    </lineage>
</organism>
<proteinExistence type="inferred from homology"/>
<feature type="signal peptide" evidence="2">
    <location>
        <begin position="1"/>
        <end position="18"/>
    </location>
</feature>
<feature type="chain" id="PRO_0000452455" description="Apolipoprotein E">
    <location>
        <begin position="19"/>
        <end position="316"/>
    </location>
</feature>
<feature type="repeat" description="1">
    <location>
        <begin position="83"/>
        <end position="104"/>
    </location>
</feature>
<feature type="repeat" description="2">
    <location>
        <begin position="105"/>
        <end position="126"/>
    </location>
</feature>
<feature type="repeat" description="3">
    <location>
        <begin position="127"/>
        <end position="148"/>
    </location>
</feature>
<feature type="repeat" description="4">
    <location>
        <begin position="149"/>
        <end position="170"/>
    </location>
</feature>
<feature type="repeat" description="5">
    <location>
        <begin position="171"/>
        <end position="192"/>
    </location>
</feature>
<feature type="repeat" description="6">
    <location>
        <begin position="193"/>
        <end position="214"/>
    </location>
</feature>
<feature type="repeat" description="7">
    <location>
        <begin position="215"/>
        <end position="232"/>
    </location>
</feature>
<feature type="repeat" description="8">
    <location>
        <begin position="233"/>
        <end position="254"/>
    </location>
</feature>
<feature type="region of interest" description="8 X 22 AA approximate tandem repeats">
    <location>
        <begin position="83"/>
        <end position="254"/>
    </location>
</feature>
<feature type="region of interest" description="LDL and other lipoprotein receptors binding" evidence="1">
    <location>
        <begin position="161"/>
        <end position="171"/>
    </location>
</feature>
<feature type="region of interest" description="Lipid-binding and lipoprotein association" evidence="1">
    <location>
        <begin position="213"/>
        <end position="289"/>
    </location>
</feature>
<feature type="region of interest" description="Homooligomerization" evidence="1">
    <location>
        <begin position="265"/>
        <end position="316"/>
    </location>
</feature>
<feature type="region of interest" description="Specificity for association with VLDL" evidence="1">
    <location>
        <begin position="277"/>
        <end position="289"/>
    </location>
</feature>
<feature type="binding site" evidence="1">
    <location>
        <begin position="165"/>
        <end position="168"/>
    </location>
    <ligand>
        <name>heparin</name>
        <dbReference type="ChEBI" id="CHEBI:28304"/>
    </ligand>
</feature>
<feature type="binding site" evidence="1">
    <location>
        <begin position="228"/>
        <end position="235"/>
    </location>
    <ligand>
        <name>heparin</name>
        <dbReference type="ChEBI" id="CHEBI:28304"/>
    </ligand>
</feature>
<gene>
    <name type="primary">APOE</name>
</gene>
<accession>P0DUJ0</accession>
<protein>
    <recommendedName>
        <fullName>Apolipoprotein E</fullName>
        <shortName>Apo-E</shortName>
    </recommendedName>
</protein>
<reference key="1">
    <citation type="journal article" date="2020" name="Mol. Biol. Evol.">
        <title>Interspecific Gene Flow and the Evolution of Specialization in Black and White Rhinoceros.</title>
        <authorList>
            <person name="Moodley Y."/>
            <person name="Westbury M.V."/>
            <person name="Russo I.M."/>
            <person name="Gopalakrishnan S."/>
            <person name="Rakotoarivelo A."/>
            <person name="Olsen R.A."/>
            <person name="Prost S."/>
            <person name="Tunstall T."/>
            <person name="Ryder O.A."/>
            <person name="Dalen L."/>
            <person name="Bruford M.W."/>
        </authorList>
    </citation>
    <scope>NUCLEOTIDE SEQUENCE [LARGE SCALE GENOMIC DNA]</scope>
</reference>
<reference key="2">
    <citation type="unpublished observations" date="2021-01">
        <authorList>
            <person name="Puppione D.L."/>
        </authorList>
    </citation>
    <scope>IDENTIFICATION</scope>
</reference>
<comment type="function">
    <text evidence="1">APOE is an apolipoprotein, a protein associating with lipid particles, that mainly functions in lipoprotein-mediated lipid transport between organs via the plasma and interstitial fluids. APOE is a core component of plasma lipoproteins and is involved in their production, conversion and clearance. Apolipoproteins are amphipathic molecules that interact both with lipids of the lipoprotein particle core and the aqueous environment of the plasma. As such, APOE associates with chylomicrons, chylomicron remnants, very low density lipoproteins (VLDL) and intermediate density lipoproteins (IDL) but shows a preferential binding to high-density lipoproteins (HDL). It also binds a wide range of cellular receptors including the LDL receptor/LDLR and the very low-density lipoprotein receptor/VLDLR that mediate the cellular uptake of the APOE-containing lipoprotein particles. Finally, APOE also has a heparin-binding activity and binds heparan-sulfate proteoglycans on the surface of cells, a property that supports the capture and the receptor-mediated uptake of APOE-containing lipoproteins by cells.</text>
</comment>
<comment type="subunit">
    <text evidence="1">Homotetramer. May interact with ABCA1; functionally associated with ABCA1 in the biogenesis of HDLs. May interact with APP/A4 amyloid-beta peptide; the interaction is extremely stable in vitro but its physiological significance is unclear. May interact with MAPT. May interact with MAP2. In the cerebrospinal fluid, interacts with secreted SORL1. Interacts with PMEL; this allows the loading of PMEL luminal fragment on ILVs to induce fibril nucleation.</text>
</comment>
<comment type="subcellular location">
    <subcellularLocation>
        <location evidence="1">Secreted</location>
    </subcellularLocation>
    <subcellularLocation>
        <location evidence="1">Secreted</location>
        <location evidence="1">Extracellular space</location>
    </subcellularLocation>
    <subcellularLocation>
        <location evidence="1">Secreted</location>
        <location evidence="1">Extracellular space</location>
        <location evidence="1">Extracellular matrix</location>
    </subcellularLocation>
    <subcellularLocation>
        <location evidence="1">Extracellular vesicle</location>
    </subcellularLocation>
    <subcellularLocation>
        <location evidence="1">Endosome</location>
        <location evidence="1">Multivesicular body</location>
    </subcellularLocation>
    <text evidence="1">In the plasma, APOE is associated with chylomicrons, chylomicrons remnants, VLDL, LDL and HDL lipoproteins. Lipid poor oligomeric APOE is associated with the extracellular matrix in a calcium- and heparan-sulfate proteoglycans-dependent manner. Lipidation induces the release from the extracellular matrix. Colocalizes with CD63 and PMEL at exosomes and in intraluminal vesicles within multivesicular endosomes.</text>
</comment>
<comment type="PTM">
    <text evidence="1">APOE exists as multiple glycosylated and sialylated glycoforms within cells and in plasma. The extent of glycosylation and sialylation are tissue and context specific.</text>
</comment>
<comment type="PTM">
    <text evidence="1">Glycated in plasma VLDL.</text>
</comment>
<comment type="PTM">
    <text evidence="1">Phosphorylated by FAM20C in the extracellular medium.</text>
</comment>
<comment type="similarity">
    <text evidence="3">Belongs to the apolipoprotein A1/A4/E family.</text>
</comment>
<evidence type="ECO:0000250" key="1">
    <source>
        <dbReference type="UniProtKB" id="P02649"/>
    </source>
</evidence>
<evidence type="ECO:0000255" key="2"/>
<evidence type="ECO:0000305" key="3"/>